<accession>B7HHG3</accession>
<proteinExistence type="inferred from homology"/>
<protein>
    <recommendedName>
        <fullName evidence="1">Imidazole glycerol phosphate synthase subunit HisH</fullName>
        <ecNumber evidence="1">4.3.2.10</ecNumber>
    </recommendedName>
    <alternativeName>
        <fullName evidence="1">IGP synthase glutaminase subunit</fullName>
        <ecNumber evidence="1">3.5.1.2</ecNumber>
    </alternativeName>
    <alternativeName>
        <fullName evidence="1">IGP synthase subunit HisH</fullName>
    </alternativeName>
    <alternativeName>
        <fullName evidence="1">ImGP synthase subunit HisH</fullName>
        <shortName evidence="1">IGPS subunit HisH</shortName>
    </alternativeName>
</protein>
<name>HIS5_BACC4</name>
<evidence type="ECO:0000255" key="1">
    <source>
        <dbReference type="HAMAP-Rule" id="MF_00278"/>
    </source>
</evidence>
<organism>
    <name type="scientific">Bacillus cereus (strain B4264)</name>
    <dbReference type="NCBI Taxonomy" id="405532"/>
    <lineage>
        <taxon>Bacteria</taxon>
        <taxon>Bacillati</taxon>
        <taxon>Bacillota</taxon>
        <taxon>Bacilli</taxon>
        <taxon>Bacillales</taxon>
        <taxon>Bacillaceae</taxon>
        <taxon>Bacillus</taxon>
        <taxon>Bacillus cereus group</taxon>
    </lineage>
</organism>
<reference key="1">
    <citation type="submission" date="2008-10" db="EMBL/GenBank/DDBJ databases">
        <title>Genome sequence of Bacillus cereus B4264.</title>
        <authorList>
            <person name="Dodson R.J."/>
            <person name="Durkin A.S."/>
            <person name="Rosovitz M.J."/>
            <person name="Rasko D.A."/>
            <person name="Hoffmaster A."/>
            <person name="Ravel J."/>
            <person name="Sutton G."/>
        </authorList>
    </citation>
    <scope>NUCLEOTIDE SEQUENCE [LARGE SCALE GENOMIC DNA]</scope>
    <source>
        <strain>B4264</strain>
    </source>
</reference>
<comment type="function">
    <text evidence="1">IGPS catalyzes the conversion of PRFAR and glutamine to IGP, AICAR and glutamate. The HisH subunit catalyzes the hydrolysis of glutamine to glutamate and ammonia as part of the synthesis of IGP and AICAR. The resulting ammonia molecule is channeled to the active site of HisF.</text>
</comment>
<comment type="catalytic activity">
    <reaction evidence="1">
        <text>5-[(5-phospho-1-deoxy-D-ribulos-1-ylimino)methylamino]-1-(5-phospho-beta-D-ribosyl)imidazole-4-carboxamide + L-glutamine = D-erythro-1-(imidazol-4-yl)glycerol 3-phosphate + 5-amino-1-(5-phospho-beta-D-ribosyl)imidazole-4-carboxamide + L-glutamate + H(+)</text>
        <dbReference type="Rhea" id="RHEA:24793"/>
        <dbReference type="ChEBI" id="CHEBI:15378"/>
        <dbReference type="ChEBI" id="CHEBI:29985"/>
        <dbReference type="ChEBI" id="CHEBI:58278"/>
        <dbReference type="ChEBI" id="CHEBI:58359"/>
        <dbReference type="ChEBI" id="CHEBI:58475"/>
        <dbReference type="ChEBI" id="CHEBI:58525"/>
        <dbReference type="EC" id="4.3.2.10"/>
    </reaction>
</comment>
<comment type="catalytic activity">
    <reaction evidence="1">
        <text>L-glutamine + H2O = L-glutamate + NH4(+)</text>
        <dbReference type="Rhea" id="RHEA:15889"/>
        <dbReference type="ChEBI" id="CHEBI:15377"/>
        <dbReference type="ChEBI" id="CHEBI:28938"/>
        <dbReference type="ChEBI" id="CHEBI:29985"/>
        <dbReference type="ChEBI" id="CHEBI:58359"/>
        <dbReference type="EC" id="3.5.1.2"/>
    </reaction>
</comment>
<comment type="pathway">
    <text evidence="1">Amino-acid biosynthesis; L-histidine biosynthesis; L-histidine from 5-phospho-alpha-D-ribose 1-diphosphate: step 5/9.</text>
</comment>
<comment type="subunit">
    <text evidence="1">Heterodimer of HisH and HisF.</text>
</comment>
<comment type="subcellular location">
    <subcellularLocation>
        <location evidence="1">Cytoplasm</location>
    </subcellularLocation>
</comment>
<dbReference type="EC" id="4.3.2.10" evidence="1"/>
<dbReference type="EC" id="3.5.1.2" evidence="1"/>
<dbReference type="EMBL" id="CP001176">
    <property type="protein sequence ID" value="ACK61672.1"/>
    <property type="molecule type" value="Genomic_DNA"/>
</dbReference>
<dbReference type="RefSeq" id="WP_000560361.1">
    <property type="nucleotide sequence ID" value="NZ_VEHB01000003.1"/>
</dbReference>
<dbReference type="SMR" id="B7HHG3"/>
<dbReference type="MEROPS" id="C26.965"/>
<dbReference type="KEGG" id="bcb:BCB4264_A1461"/>
<dbReference type="HOGENOM" id="CLU_071837_2_2_9"/>
<dbReference type="UniPathway" id="UPA00031">
    <property type="reaction ID" value="UER00010"/>
</dbReference>
<dbReference type="Proteomes" id="UP000007096">
    <property type="component" value="Chromosome"/>
</dbReference>
<dbReference type="GO" id="GO:0005737">
    <property type="term" value="C:cytoplasm"/>
    <property type="evidence" value="ECO:0007669"/>
    <property type="project" value="UniProtKB-SubCell"/>
</dbReference>
<dbReference type="GO" id="GO:0004359">
    <property type="term" value="F:glutaminase activity"/>
    <property type="evidence" value="ECO:0007669"/>
    <property type="project" value="UniProtKB-EC"/>
</dbReference>
<dbReference type="GO" id="GO:0000107">
    <property type="term" value="F:imidazoleglycerol-phosphate synthase activity"/>
    <property type="evidence" value="ECO:0007669"/>
    <property type="project" value="UniProtKB-UniRule"/>
</dbReference>
<dbReference type="GO" id="GO:0016829">
    <property type="term" value="F:lyase activity"/>
    <property type="evidence" value="ECO:0007669"/>
    <property type="project" value="UniProtKB-KW"/>
</dbReference>
<dbReference type="GO" id="GO:0000105">
    <property type="term" value="P:L-histidine biosynthetic process"/>
    <property type="evidence" value="ECO:0007669"/>
    <property type="project" value="UniProtKB-UniRule"/>
</dbReference>
<dbReference type="CDD" id="cd01748">
    <property type="entry name" value="GATase1_IGP_Synthase"/>
    <property type="match status" value="1"/>
</dbReference>
<dbReference type="FunFam" id="3.40.50.880:FF:000028">
    <property type="entry name" value="Imidazole glycerol phosphate synthase subunit HisH"/>
    <property type="match status" value="1"/>
</dbReference>
<dbReference type="Gene3D" id="3.40.50.880">
    <property type="match status" value="1"/>
</dbReference>
<dbReference type="HAMAP" id="MF_00278">
    <property type="entry name" value="HisH"/>
    <property type="match status" value="1"/>
</dbReference>
<dbReference type="InterPro" id="IPR029062">
    <property type="entry name" value="Class_I_gatase-like"/>
</dbReference>
<dbReference type="InterPro" id="IPR017926">
    <property type="entry name" value="GATASE"/>
</dbReference>
<dbReference type="InterPro" id="IPR010139">
    <property type="entry name" value="Imidazole-glycPsynth_HisH"/>
</dbReference>
<dbReference type="NCBIfam" id="TIGR01855">
    <property type="entry name" value="IMP_synth_hisH"/>
    <property type="match status" value="1"/>
</dbReference>
<dbReference type="PANTHER" id="PTHR42701">
    <property type="entry name" value="IMIDAZOLE GLYCEROL PHOSPHATE SYNTHASE SUBUNIT HISH"/>
    <property type="match status" value="1"/>
</dbReference>
<dbReference type="PANTHER" id="PTHR42701:SF1">
    <property type="entry name" value="IMIDAZOLE GLYCEROL PHOSPHATE SYNTHASE SUBUNIT HISH"/>
    <property type="match status" value="1"/>
</dbReference>
<dbReference type="Pfam" id="PF00117">
    <property type="entry name" value="GATase"/>
    <property type="match status" value="1"/>
</dbReference>
<dbReference type="PIRSF" id="PIRSF000495">
    <property type="entry name" value="Amidotransf_hisH"/>
    <property type="match status" value="1"/>
</dbReference>
<dbReference type="SUPFAM" id="SSF52317">
    <property type="entry name" value="Class I glutamine amidotransferase-like"/>
    <property type="match status" value="1"/>
</dbReference>
<dbReference type="PROSITE" id="PS51273">
    <property type="entry name" value="GATASE_TYPE_1"/>
    <property type="match status" value="1"/>
</dbReference>
<sequence length="209" mass="23244">MIAIIDYGMGNIRSVEQALKYIGAEYIVTSNKKEILRSDGVILPGVGAFPKAMDVLEERDLVCVLKEVCDIGKPLLGICLGMQLLFERSEELKDCSGLGLLPGEIRKLKVSYKIPHMGWNELRKEREFPLWNGLVDGSFVYYVHSYYADCPDEIVCGVSDYGMQVPGFVAKGNVFGAQFHPEKSGEIGMQILKNFQGVVEAWKSSQLSI</sequence>
<gene>
    <name evidence="1" type="primary">hisH</name>
    <name type="ordered locus">BCB4264_A1461</name>
</gene>
<keyword id="KW-0028">Amino-acid biosynthesis</keyword>
<keyword id="KW-0963">Cytoplasm</keyword>
<keyword id="KW-0315">Glutamine amidotransferase</keyword>
<keyword id="KW-0368">Histidine biosynthesis</keyword>
<keyword id="KW-0378">Hydrolase</keyword>
<keyword id="KW-0456">Lyase</keyword>
<feature type="chain" id="PRO_1000119371" description="Imidazole glycerol phosphate synthase subunit HisH">
    <location>
        <begin position="1"/>
        <end position="209"/>
    </location>
</feature>
<feature type="domain" description="Glutamine amidotransferase type-1" evidence="1">
    <location>
        <begin position="1"/>
        <end position="205"/>
    </location>
</feature>
<feature type="active site" description="Nucleophile" evidence="1">
    <location>
        <position position="79"/>
    </location>
</feature>
<feature type="active site" evidence="1">
    <location>
        <position position="180"/>
    </location>
</feature>
<feature type="active site" evidence="1">
    <location>
        <position position="182"/>
    </location>
</feature>